<keyword id="KW-1003">Cell membrane</keyword>
<keyword id="KW-0936">Ethylene signaling pathway</keyword>
<keyword id="KW-0472">Membrane</keyword>
<keyword id="KW-0592">Phosphate transport</keyword>
<keyword id="KW-0769">Symport</keyword>
<keyword id="KW-0812">Transmembrane</keyword>
<keyword id="KW-1133">Transmembrane helix</keyword>
<keyword id="KW-0813">Transport</keyword>
<dbReference type="EMBL" id="EF564180">
    <property type="protein sequence ID" value="ABS12068.1"/>
    <property type="molecule type" value="mRNA"/>
</dbReference>
<dbReference type="EMBL" id="EU532760">
    <property type="protein sequence ID" value="ACB37438.1"/>
    <property type="molecule type" value="Genomic_DNA"/>
</dbReference>
<dbReference type="SMR" id="A7KTC5"/>
<dbReference type="GO" id="GO:0005886">
    <property type="term" value="C:plasma membrane"/>
    <property type="evidence" value="ECO:0007669"/>
    <property type="project" value="UniProtKB-SubCell"/>
</dbReference>
<dbReference type="GO" id="GO:0005315">
    <property type="term" value="F:phosphate transmembrane transporter activity"/>
    <property type="evidence" value="ECO:0007669"/>
    <property type="project" value="InterPro"/>
</dbReference>
<dbReference type="GO" id="GO:0015293">
    <property type="term" value="F:symporter activity"/>
    <property type="evidence" value="ECO:0007669"/>
    <property type="project" value="UniProtKB-KW"/>
</dbReference>
<dbReference type="GO" id="GO:0009873">
    <property type="term" value="P:ethylene-activated signaling pathway"/>
    <property type="evidence" value="ECO:0007669"/>
    <property type="project" value="UniProtKB-KW"/>
</dbReference>
<dbReference type="GO" id="GO:0080187">
    <property type="term" value="P:floral organ senescence"/>
    <property type="evidence" value="ECO:0000270"/>
    <property type="project" value="UniProtKB"/>
</dbReference>
<dbReference type="GO" id="GO:0006817">
    <property type="term" value="P:phosphate ion transport"/>
    <property type="evidence" value="ECO:0007669"/>
    <property type="project" value="UniProtKB-KW"/>
</dbReference>
<dbReference type="GO" id="GO:0009723">
    <property type="term" value="P:response to ethylene"/>
    <property type="evidence" value="ECO:0000270"/>
    <property type="project" value="UniProtKB"/>
</dbReference>
<dbReference type="CDD" id="cd17364">
    <property type="entry name" value="MFS_PhT"/>
    <property type="match status" value="1"/>
</dbReference>
<dbReference type="FunFam" id="1.20.1250.20:FF:000175">
    <property type="entry name" value="Inorganic phosphate transporter 1-6"/>
    <property type="match status" value="1"/>
</dbReference>
<dbReference type="Gene3D" id="1.20.1250.20">
    <property type="entry name" value="MFS general substrate transporter like domains"/>
    <property type="match status" value="1"/>
</dbReference>
<dbReference type="InterPro" id="IPR020846">
    <property type="entry name" value="MFS_dom"/>
</dbReference>
<dbReference type="InterPro" id="IPR005828">
    <property type="entry name" value="MFS_sugar_transport-like"/>
</dbReference>
<dbReference type="InterPro" id="IPR036259">
    <property type="entry name" value="MFS_trans_sf"/>
</dbReference>
<dbReference type="InterPro" id="IPR004738">
    <property type="entry name" value="Phos_permease"/>
</dbReference>
<dbReference type="NCBIfam" id="TIGR00887">
    <property type="entry name" value="2A0109"/>
    <property type="match status" value="1"/>
</dbReference>
<dbReference type="PANTHER" id="PTHR24064">
    <property type="entry name" value="SOLUTE CARRIER FAMILY 22 MEMBER"/>
    <property type="match status" value="1"/>
</dbReference>
<dbReference type="Pfam" id="PF00083">
    <property type="entry name" value="Sugar_tr"/>
    <property type="match status" value="1"/>
</dbReference>
<dbReference type="SUPFAM" id="SSF103473">
    <property type="entry name" value="MFS general substrate transporter"/>
    <property type="match status" value="1"/>
</dbReference>
<dbReference type="PROSITE" id="PS50850">
    <property type="entry name" value="MFS"/>
    <property type="match status" value="1"/>
</dbReference>
<proteinExistence type="evidence at transcript level"/>
<protein>
    <recommendedName>
        <fullName evidence="5 6">Low affinity inorganic phosphate transporter 1</fullName>
        <shortName evidence="5 6">PhPT1</shortName>
        <shortName evidence="5">PhPht1;1</shortName>
    </recommendedName>
    <alternativeName>
        <fullName evidence="7">Arbuscular mycorrhiza-induced phosphate transporter PT1</fullName>
        <shortName evidence="7">AM-induced phosphate transporter PT1</shortName>
    </alternativeName>
    <alternativeName>
        <fullName evidence="7">H(+)/Pi cotransporter PT1</fullName>
    </alternativeName>
</protein>
<evidence type="ECO:0000250" key="1">
    <source>
        <dbReference type="UniProtKB" id="Q8GSG4"/>
    </source>
</evidence>
<evidence type="ECO:0000255" key="2"/>
<evidence type="ECO:0000256" key="3">
    <source>
        <dbReference type="SAM" id="MobiDB-lite"/>
    </source>
</evidence>
<evidence type="ECO:0000269" key="4">
    <source>
    </source>
</evidence>
<evidence type="ECO:0000303" key="5">
    <source>
    </source>
</evidence>
<evidence type="ECO:0000303" key="6">
    <source>
    </source>
</evidence>
<evidence type="ECO:0000305" key="7"/>
<organism>
    <name type="scientific">Petunia hybrida</name>
    <name type="common">Petunia</name>
    <dbReference type="NCBI Taxonomy" id="4102"/>
    <lineage>
        <taxon>Eukaryota</taxon>
        <taxon>Viridiplantae</taxon>
        <taxon>Streptophyta</taxon>
        <taxon>Embryophyta</taxon>
        <taxon>Tracheophyta</taxon>
        <taxon>Spermatophyta</taxon>
        <taxon>Magnoliopsida</taxon>
        <taxon>eudicotyledons</taxon>
        <taxon>Gunneridae</taxon>
        <taxon>Pentapetalae</taxon>
        <taxon>asterids</taxon>
        <taxon>lamiids</taxon>
        <taxon>Solanales</taxon>
        <taxon>Solanaceae</taxon>
        <taxon>Petunioideae</taxon>
        <taxon>Petunia</taxon>
    </lineage>
</organism>
<accession>A7KTC5</accession>
<accession>B2CPI3</accession>
<gene>
    <name evidence="5 6" type="primary">PT1</name>
</gene>
<comment type="function">
    <text evidence="1 4">Low-affinity transporter for external inorganic phosphate (Pi) (By similarity). Involved in phosphorus (P) remobilization from dying to developing tissues during corolla senescence in an ethylene-dependent manner (PubMed:19380421).</text>
</comment>
<comment type="catalytic activity">
    <reaction evidence="1">
        <text>phosphate(in) + H(+)(in) = phosphate(out) + H(+)(out)</text>
        <dbReference type="Rhea" id="RHEA:29939"/>
        <dbReference type="ChEBI" id="CHEBI:15378"/>
        <dbReference type="ChEBI" id="CHEBI:43474"/>
    </reaction>
    <physiologicalReaction direction="right-to-left" evidence="1">
        <dbReference type="Rhea" id="RHEA:29941"/>
    </physiologicalReaction>
</comment>
<comment type="subcellular location">
    <subcellularLocation>
        <location evidence="1">Cell membrane</location>
        <topology evidence="2">Multi-pass membrane protein</topology>
    </subcellularLocation>
</comment>
<comment type="induction">
    <text evidence="4">By ethylene during corolla senescence.</text>
</comment>
<comment type="miscellaneous">
    <text evidence="7">Although related to the sugar transporter family, it does not transport sugars.</text>
</comment>
<comment type="similarity">
    <text evidence="7">Belongs to the major facilitator superfamily. Phosphate:H(+) symporter (TC 2.A.1.9) family.</text>
</comment>
<name>PHT11_PETHY</name>
<feature type="chain" id="PRO_0000450036" description="Low affinity inorganic phosphate transporter 1">
    <location>
        <begin position="1"/>
        <end position="534"/>
    </location>
</feature>
<feature type="topological domain" description="Cytoplasmic" evidence="7">
    <location>
        <begin position="1"/>
        <end position="23"/>
    </location>
</feature>
<feature type="transmembrane region" description="Helical; Name=1" evidence="2">
    <location>
        <begin position="24"/>
        <end position="44"/>
    </location>
</feature>
<feature type="topological domain" description="Extracellular" evidence="7">
    <location>
        <begin position="45"/>
        <end position="69"/>
    </location>
</feature>
<feature type="transmembrane region" description="Helical; Name=2" evidence="2">
    <location>
        <begin position="70"/>
        <end position="90"/>
    </location>
</feature>
<feature type="topological domain" description="Cytoplasmic" evidence="7">
    <location>
        <begin position="91"/>
        <end position="98"/>
    </location>
</feature>
<feature type="transmembrane region" description="Helical; Name=3" evidence="2">
    <location>
        <begin position="99"/>
        <end position="119"/>
    </location>
</feature>
<feature type="topological domain" description="Extracellular" evidence="7">
    <location>
        <begin position="120"/>
        <end position="124"/>
    </location>
</feature>
<feature type="transmembrane region" description="Helical; Name=4" evidence="2">
    <location>
        <begin position="125"/>
        <end position="145"/>
    </location>
</feature>
<feature type="topological domain" description="Cytoplasmic" evidence="7">
    <location>
        <begin position="146"/>
        <end position="163"/>
    </location>
</feature>
<feature type="transmembrane region" description="Helical; Name=5" evidence="2">
    <location>
        <begin position="164"/>
        <end position="184"/>
    </location>
</feature>
<feature type="topological domain" description="Extracellular" evidence="7">
    <location>
        <begin position="185"/>
        <end position="210"/>
    </location>
</feature>
<feature type="transmembrane region" description="Helical; Name=6" evidence="2">
    <location>
        <begin position="211"/>
        <end position="231"/>
    </location>
</feature>
<feature type="topological domain" description="Cytoplasmic" evidence="7">
    <location>
        <begin position="232"/>
        <end position="290"/>
    </location>
</feature>
<feature type="transmembrane region" description="Helical; Name=7" evidence="2">
    <location>
        <begin position="291"/>
        <end position="311"/>
    </location>
</feature>
<feature type="topological domain" description="Extracellular" evidence="7">
    <location>
        <begin position="312"/>
        <end position="343"/>
    </location>
</feature>
<feature type="transmembrane region" description="Helical; Name=8" evidence="2">
    <location>
        <begin position="344"/>
        <end position="364"/>
    </location>
</feature>
<feature type="topological domain" description="Cytoplasmic" evidence="7">
    <location>
        <begin position="365"/>
        <end position="369"/>
    </location>
</feature>
<feature type="transmembrane region" description="Helical; Name=9" evidence="2">
    <location>
        <begin position="370"/>
        <end position="390"/>
    </location>
</feature>
<feature type="topological domain" description="Extracellular" evidence="7">
    <location>
        <begin position="391"/>
        <end position="400"/>
    </location>
</feature>
<feature type="transmembrane region" description="Helical; Name=10" evidence="2">
    <location>
        <begin position="401"/>
        <end position="421"/>
    </location>
</feature>
<feature type="topological domain" description="Cytoplasmic" evidence="7">
    <location>
        <begin position="422"/>
        <end position="440"/>
    </location>
</feature>
<feature type="transmembrane region" description="Helical; Name=11" evidence="2">
    <location>
        <begin position="441"/>
        <end position="461"/>
    </location>
</feature>
<feature type="topological domain" description="Extracellular" evidence="7">
    <location>
        <begin position="462"/>
        <end position="481"/>
    </location>
</feature>
<feature type="transmembrane region" description="Helical; Name=12" evidence="2">
    <location>
        <begin position="482"/>
        <end position="502"/>
    </location>
</feature>
<feature type="topological domain" description="Cytoplasmic" evidence="7">
    <location>
        <begin position="503"/>
        <end position="534"/>
    </location>
</feature>
<feature type="region of interest" description="Disordered" evidence="3">
    <location>
        <begin position="507"/>
        <end position="534"/>
    </location>
</feature>
<sequence length="534" mass="58563">MAKDLQVLTALDVAKTQLYHFTAIVIAGMGFFTDAYDLFCISLVTKLLGRIYYHHEGALKPGSLPPNVAAAVNGVAFCGTLAGQLFFGWLGDKLGRKKVYGMTLMLMVICSIASGLSFGHTPKSVMATLCFFRFWLGFGIGGDYPLSATIMSEYANKKTRGAFIAAVFAMQGFGILAGGMVAIIVSAAFKNQFPAPAYKDGALASTISQADFVWRIIVMFGAIPTALTYYWRMKMPETARYTALVAKNLKQATNDMSKVLQVEIEPEQEKVEEISQGNDFGLFTKQFLRRHGLHLLGTASTWFLLDIAFYSQNLFQKDIFSAIGWIPPAETMNALEEVYRIARAQTLIALCSTVPGYWFTVAFIDKIGRFAIQLMGFFFMTVFMFALAIPYTHWTHKDNRIGFVIMYSLTFFFANFGPNATTFVVPAEIFPARLRSTCHGISAAAGKAGAMVGAFGFLYAAQSTDPKKTDAGYPAGIGVRNSLIVLGCVNFLGMLFTLLVPESKGKSLEEMSRENEGEDENGTEMRASGRTVPV</sequence>
<reference key="1">
    <citation type="journal article" date="2009" name="J. Exp. Bot.">
        <title>Ethylene regulates phosphorus remobilization and expression of a phosphate transporter (PhPT1) during petunia corolla senescence.</title>
        <authorList>
            <person name="Chapin L.J."/>
            <person name="Jones M.L."/>
        </authorList>
    </citation>
    <scope>NUCLEOTIDE SEQUENCE [MRNA]</scope>
    <scope>FUNCTION</scope>
    <scope>INDUCTION BY ETHYLENE</scope>
    <source>
        <strain>cv. Mitchell</strain>
        <tissue>Corolla</tissue>
    </source>
</reference>
<reference key="2">
    <citation type="journal article" date="2008" name="Plant J.">
        <title>A transgenic dTph1 insertional mutagenesis system for forward genetics in mycorrhizal phosphate transport of Petunia.</title>
        <authorList>
            <person name="Wegmueller S."/>
            <person name="Svistoonoff S."/>
            <person name="Reinhardt D."/>
            <person name="Stuurman J."/>
            <person name="Amrhein N."/>
            <person name="Bucher M."/>
        </authorList>
    </citation>
    <scope>NUCLEOTIDE SEQUENCE [GENOMIC DNA] OF 232-504</scope>
    <source>
        <strain>cv. W115</strain>
        <strain>cv. W138</strain>
    </source>
</reference>